<dbReference type="EMBL" id="AABR07030946">
    <property type="status" value="NOT_ANNOTATED_CDS"/>
    <property type="molecule type" value="Genomic_DNA"/>
</dbReference>
<dbReference type="RefSeq" id="NP_001395857.1">
    <property type="nucleotide sequence ID" value="NM_001408928.1"/>
</dbReference>
<dbReference type="RefSeq" id="XP_001081846.1">
    <property type="nucleotide sequence ID" value="XM_001081846.4"/>
</dbReference>
<dbReference type="RefSeq" id="XP_003751038.1">
    <property type="nucleotide sequence ID" value="XM_003750990.4"/>
</dbReference>
<dbReference type="SMR" id="M0R3Q7"/>
<dbReference type="STRING" id="10116.ENSRNOP00000063978"/>
<dbReference type="GlyCosmos" id="M0R3Q7">
    <property type="glycosylation" value="7 sites, No reported glycans"/>
</dbReference>
<dbReference type="GlyGen" id="M0R3Q7">
    <property type="glycosylation" value="7 sites"/>
</dbReference>
<dbReference type="PhosphoSitePlus" id="M0R3Q7"/>
<dbReference type="PaxDb" id="10116-ENSRNOP00000063978"/>
<dbReference type="Ensembl" id="ENSRNOT00000074372.3">
    <property type="protein sequence ID" value="ENSRNOP00000063978.1"/>
    <property type="gene ID" value="ENSRNOG00000046946.3"/>
</dbReference>
<dbReference type="GeneID" id="688333"/>
<dbReference type="AGR" id="RGD:1590039"/>
<dbReference type="RGD" id="1590039">
    <property type="gene designation" value="Ptchd3"/>
</dbReference>
<dbReference type="eggNOG" id="KOG1935">
    <property type="taxonomic scope" value="Eukaryota"/>
</dbReference>
<dbReference type="GeneTree" id="ENSGT00940000158727"/>
<dbReference type="HOGENOM" id="CLU_002359_2_1_1"/>
<dbReference type="InParanoid" id="M0R3Q7"/>
<dbReference type="OMA" id="FYSITWF"/>
<dbReference type="PRO" id="PR:M0R3Q7"/>
<dbReference type="Proteomes" id="UP000002494">
    <property type="component" value="Chromosome 10"/>
</dbReference>
<dbReference type="Bgee" id="ENSRNOG00000046946">
    <property type="expression patterns" value="Expressed in testis and 2 other cell types or tissues"/>
</dbReference>
<dbReference type="GO" id="GO:0005783">
    <property type="term" value="C:endoplasmic reticulum"/>
    <property type="evidence" value="ECO:0000250"/>
    <property type="project" value="UniProtKB"/>
</dbReference>
<dbReference type="GO" id="GO:0005789">
    <property type="term" value="C:endoplasmic reticulum membrane"/>
    <property type="evidence" value="ECO:0007669"/>
    <property type="project" value="UniProtKB-SubCell"/>
</dbReference>
<dbReference type="GO" id="GO:0016020">
    <property type="term" value="C:membrane"/>
    <property type="evidence" value="ECO:0000318"/>
    <property type="project" value="GO_Central"/>
</dbReference>
<dbReference type="GO" id="GO:0005886">
    <property type="term" value="C:plasma membrane"/>
    <property type="evidence" value="ECO:0007669"/>
    <property type="project" value="UniProtKB-KW"/>
</dbReference>
<dbReference type="GO" id="GO:0097225">
    <property type="term" value="C:sperm midpiece"/>
    <property type="evidence" value="ECO:0000314"/>
    <property type="project" value="UniProtKB"/>
</dbReference>
<dbReference type="FunFam" id="1.20.1640.10:FF:000013">
    <property type="entry name" value="PaTched Related family"/>
    <property type="match status" value="1"/>
</dbReference>
<dbReference type="Gene3D" id="1.20.1640.10">
    <property type="entry name" value="Multidrug efflux transporter AcrB transmembrane domain"/>
    <property type="match status" value="2"/>
</dbReference>
<dbReference type="InterPro" id="IPR051697">
    <property type="entry name" value="Patched_domain-protein"/>
</dbReference>
<dbReference type="InterPro" id="IPR003392">
    <property type="entry name" value="PTHD_SSD"/>
</dbReference>
<dbReference type="InterPro" id="IPR000731">
    <property type="entry name" value="SSD"/>
</dbReference>
<dbReference type="PANTHER" id="PTHR10796:SF60">
    <property type="entry name" value="PATCHED DOMAIN-CONTAINING PROTEIN 3"/>
    <property type="match status" value="1"/>
</dbReference>
<dbReference type="PANTHER" id="PTHR10796">
    <property type="entry name" value="PATCHED-RELATED"/>
    <property type="match status" value="1"/>
</dbReference>
<dbReference type="Pfam" id="PF02460">
    <property type="entry name" value="Patched"/>
    <property type="match status" value="1"/>
</dbReference>
<dbReference type="SUPFAM" id="SSF82866">
    <property type="entry name" value="Multidrug efflux transporter AcrB transmembrane domain"/>
    <property type="match status" value="2"/>
</dbReference>
<dbReference type="PROSITE" id="PS50156">
    <property type="entry name" value="SSD"/>
    <property type="match status" value="1"/>
</dbReference>
<reference key="1">
    <citation type="journal article" date="2004" name="Nature">
        <title>Genome sequence of the Brown Norway rat yields insights into mammalian evolution.</title>
        <authorList>
            <person name="Gibbs R.A."/>
            <person name="Weinstock G.M."/>
            <person name="Metzker M.L."/>
            <person name="Muzny D.M."/>
            <person name="Sodergren E.J."/>
            <person name="Scherer S."/>
            <person name="Scott G."/>
            <person name="Steffen D."/>
            <person name="Worley K.C."/>
            <person name="Burch P.E."/>
            <person name="Okwuonu G."/>
            <person name="Hines S."/>
            <person name="Lewis L."/>
            <person name="Deramo C."/>
            <person name="Delgado O."/>
            <person name="Dugan-Rocha S."/>
            <person name="Miner G."/>
            <person name="Morgan M."/>
            <person name="Hawes A."/>
            <person name="Gill R."/>
            <person name="Holt R.A."/>
            <person name="Adams M.D."/>
            <person name="Amanatides P.G."/>
            <person name="Baden-Tillson H."/>
            <person name="Barnstead M."/>
            <person name="Chin S."/>
            <person name="Evans C.A."/>
            <person name="Ferriera S."/>
            <person name="Fosler C."/>
            <person name="Glodek A."/>
            <person name="Gu Z."/>
            <person name="Jennings D."/>
            <person name="Kraft C.L."/>
            <person name="Nguyen T."/>
            <person name="Pfannkoch C.M."/>
            <person name="Sitter C."/>
            <person name="Sutton G.G."/>
            <person name="Venter J.C."/>
            <person name="Woodage T."/>
            <person name="Smith D."/>
            <person name="Lee H.-M."/>
            <person name="Gustafson E."/>
            <person name="Cahill P."/>
            <person name="Kana A."/>
            <person name="Doucette-Stamm L."/>
            <person name="Weinstock K."/>
            <person name="Fechtel K."/>
            <person name="Weiss R.B."/>
            <person name="Dunn D.M."/>
            <person name="Green E.D."/>
            <person name="Blakesley R.W."/>
            <person name="Bouffard G.G."/>
            <person name="De Jong P.J."/>
            <person name="Osoegawa K."/>
            <person name="Zhu B."/>
            <person name="Marra M."/>
            <person name="Schein J."/>
            <person name="Bosdet I."/>
            <person name="Fjell C."/>
            <person name="Jones S."/>
            <person name="Krzywinski M."/>
            <person name="Mathewson C."/>
            <person name="Siddiqui A."/>
            <person name="Wye N."/>
            <person name="McPherson J."/>
            <person name="Zhao S."/>
            <person name="Fraser C.M."/>
            <person name="Shetty J."/>
            <person name="Shatsman S."/>
            <person name="Geer K."/>
            <person name="Chen Y."/>
            <person name="Abramzon S."/>
            <person name="Nierman W.C."/>
            <person name="Havlak P.H."/>
            <person name="Chen R."/>
            <person name="Durbin K.J."/>
            <person name="Egan A."/>
            <person name="Ren Y."/>
            <person name="Song X.-Z."/>
            <person name="Li B."/>
            <person name="Liu Y."/>
            <person name="Qin X."/>
            <person name="Cawley S."/>
            <person name="Cooney A.J."/>
            <person name="D'Souza L.M."/>
            <person name="Martin K."/>
            <person name="Wu J.Q."/>
            <person name="Gonzalez-Garay M.L."/>
            <person name="Jackson A.R."/>
            <person name="Kalafus K.J."/>
            <person name="McLeod M.P."/>
            <person name="Milosavljevic A."/>
            <person name="Virk D."/>
            <person name="Volkov A."/>
            <person name="Wheeler D.A."/>
            <person name="Zhang Z."/>
            <person name="Bailey J.A."/>
            <person name="Eichler E.E."/>
            <person name="Tuzun E."/>
            <person name="Birney E."/>
            <person name="Mongin E."/>
            <person name="Ureta-Vidal A."/>
            <person name="Woodwark C."/>
            <person name="Zdobnov E."/>
            <person name="Bork P."/>
            <person name="Suyama M."/>
            <person name="Torrents D."/>
            <person name="Alexandersson M."/>
            <person name="Trask B.J."/>
            <person name="Young J.M."/>
            <person name="Huang H."/>
            <person name="Wang H."/>
            <person name="Xing H."/>
            <person name="Daniels S."/>
            <person name="Gietzen D."/>
            <person name="Schmidt J."/>
            <person name="Stevens K."/>
            <person name="Vitt U."/>
            <person name="Wingrove J."/>
            <person name="Camara F."/>
            <person name="Mar Alba M."/>
            <person name="Abril J.F."/>
            <person name="Guigo R."/>
            <person name="Smit A."/>
            <person name="Dubchak I."/>
            <person name="Rubin E.M."/>
            <person name="Couronne O."/>
            <person name="Poliakov A."/>
            <person name="Huebner N."/>
            <person name="Ganten D."/>
            <person name="Goesele C."/>
            <person name="Hummel O."/>
            <person name="Kreitler T."/>
            <person name="Lee Y.-A."/>
            <person name="Monti J."/>
            <person name="Schulz H."/>
            <person name="Zimdahl H."/>
            <person name="Himmelbauer H."/>
            <person name="Lehrach H."/>
            <person name="Jacob H.J."/>
            <person name="Bromberg S."/>
            <person name="Gullings-Handley J."/>
            <person name="Jensen-Seaman M.I."/>
            <person name="Kwitek A.E."/>
            <person name="Lazar J."/>
            <person name="Pasko D."/>
            <person name="Tonellato P.J."/>
            <person name="Twigger S."/>
            <person name="Ponting C.P."/>
            <person name="Duarte J.M."/>
            <person name="Rice S."/>
            <person name="Goodstadt L."/>
            <person name="Beatson S.A."/>
            <person name="Emes R.D."/>
            <person name="Winter E.E."/>
            <person name="Webber C."/>
            <person name="Brandt P."/>
            <person name="Nyakatura G."/>
            <person name="Adetobi M."/>
            <person name="Chiaromonte F."/>
            <person name="Elnitski L."/>
            <person name="Eswara P."/>
            <person name="Hardison R.C."/>
            <person name="Hou M."/>
            <person name="Kolbe D."/>
            <person name="Makova K."/>
            <person name="Miller W."/>
            <person name="Nekrutenko A."/>
            <person name="Riemer C."/>
            <person name="Schwartz S."/>
            <person name="Taylor J."/>
            <person name="Yang S."/>
            <person name="Zhang Y."/>
            <person name="Lindpaintner K."/>
            <person name="Andrews T.D."/>
            <person name="Caccamo M."/>
            <person name="Clamp M."/>
            <person name="Clarke L."/>
            <person name="Curwen V."/>
            <person name="Durbin R.M."/>
            <person name="Eyras E."/>
            <person name="Searle S.M."/>
            <person name="Cooper G.M."/>
            <person name="Batzoglou S."/>
            <person name="Brudno M."/>
            <person name="Sidow A."/>
            <person name="Stone E.A."/>
            <person name="Payseur B.A."/>
            <person name="Bourque G."/>
            <person name="Lopez-Otin C."/>
            <person name="Puente X.S."/>
            <person name="Chakrabarti K."/>
            <person name="Chatterji S."/>
            <person name="Dewey C."/>
            <person name="Pachter L."/>
            <person name="Bray N."/>
            <person name="Yap V.B."/>
            <person name="Caspi A."/>
            <person name="Tesler G."/>
            <person name="Pevzner P.A."/>
            <person name="Haussler D."/>
            <person name="Roskin K.M."/>
            <person name="Baertsch R."/>
            <person name="Clawson H."/>
            <person name="Furey T.S."/>
            <person name="Hinrichs A.S."/>
            <person name="Karolchik D."/>
            <person name="Kent W.J."/>
            <person name="Rosenbloom K.R."/>
            <person name="Trumbower H."/>
            <person name="Weirauch M."/>
            <person name="Cooper D.N."/>
            <person name="Stenson P.D."/>
            <person name="Ma B."/>
            <person name="Brent M."/>
            <person name="Arumugam M."/>
            <person name="Shteynberg D."/>
            <person name="Copley R.R."/>
            <person name="Taylor M.S."/>
            <person name="Riethman H."/>
            <person name="Mudunuri U."/>
            <person name="Peterson J."/>
            <person name="Guyer M."/>
            <person name="Felsenfeld A."/>
            <person name="Old S."/>
            <person name="Mockrin S."/>
            <person name="Collins F.S."/>
        </authorList>
    </citation>
    <scope>NUCLEOTIDE SEQUENCE [LARGE SCALE GENOMIC DNA]</scope>
    <source>
        <strain>Brown Norway</strain>
    </source>
</reference>
<reference evidence="7" key="2">
    <citation type="journal article" date="2007" name="Biochem. Biophys. Res. Commun.">
        <title>Male germ cell-specific expression of a novel patched-domain containing gene Ptchd3.</title>
        <authorList>
            <person name="Fan J."/>
            <person name="Akabane H."/>
            <person name="Zheng X."/>
            <person name="Zhou X."/>
            <person name="Zhang L."/>
            <person name="Liu Q."/>
            <person name="Zhang Y.-L."/>
            <person name="Yang J."/>
            <person name="Zhu G.-Z."/>
        </authorList>
    </citation>
    <scope>SUBCELLULAR LOCATION</scope>
    <scope>TISSUE SPECIFICITY</scope>
</reference>
<sequence length="905" mass="101843">MISSKVAPGEEEEQQEAPAEVAPAEEELRETEGQLEAVPPDEASPSWATGPPLERLPPVGQEAPPPRRCHTDCLEAPLSSCFLRLGALVGANPWLFLLGPVLLTASLGTGLIFLPKEKENLEEQYTPIGSPAKAERRFVQSHFSTNDSYRFSASRTSSETNFASILVVSHRDSLLEPEAFAEVSRLDRAVQALKVVQENGTQILYPEVCAKYSVGCVPPNPLLFSWQQNSSLNLSELTFPIHSVADHLIHLAGFFGGNVLGYATTGNRQRLVESRAMRLLYYLKTEDPEDRERSQAWLTHFLDHFNDMKSDLALEDIEVVYFTSLSRQLEFEATSKTVIPLFHLAYILIILFAVVSCSRLDCIRNKMWVAVFGVFSVAMSVVSGFGLMLHIGVPFVIIVANSPFLILGVGVDDMFIMISAWQKTSLTESVSERLSNSYSKVAVSITITTITNVLAFYTGITSSFRSVQYFCIYTGTTLLFCYFYSITCFGAIMALDGKREVVWSRWLEKPDQKYSSFKKFCCVPFGSFPDEHGDDNHPMNLFFRDYFGPFLTTSKAKFIVVLIYIFYIISSIYGCFQVQEGLDLRNLASDDSYITPYFNVEEDYFSDYGPRVMVIVTETVNYWDKDVRQKLDKCMTQFEQNEYVDKNLTEFWLEAYMQYMNNTGNNPNDKNTFMNNIAGFLNFFPVFTYDINVSSSNEITSSRGFIQTIDVSSSSNKKRMLLKLRGIAENCEVPLMVYNQAFIYFDQYAAIIENTVRNVMIASTAMFIVSLLLIPHPVCSLWVTFAIASVIVGVTGFMAFWNVNLDSISMINLVICIGFSFDFSAHISYAFVSSNEPSVNKKSIEALYLLGYPVLQSAISTIIGVCVLAAAKAYIFRTFFKIMFLVMFFGAAHGLIFIPVFLTFF</sequence>
<evidence type="ECO:0000250" key="1">
    <source>
        <dbReference type="UniProtKB" id="Q0EEE2"/>
    </source>
</evidence>
<evidence type="ECO:0000250" key="2">
    <source>
        <dbReference type="UniProtKB" id="Q3KNS1"/>
    </source>
</evidence>
<evidence type="ECO:0000255" key="3"/>
<evidence type="ECO:0000255" key="4">
    <source>
        <dbReference type="PROSITE-ProRule" id="PRU00199"/>
    </source>
</evidence>
<evidence type="ECO:0000256" key="5">
    <source>
        <dbReference type="SAM" id="MobiDB-lite"/>
    </source>
</evidence>
<evidence type="ECO:0000269" key="6">
    <source>
    </source>
</evidence>
<evidence type="ECO:0000305" key="7"/>
<evidence type="ECO:0000312" key="8">
    <source>
        <dbReference type="Proteomes" id="UP000002494"/>
    </source>
</evidence>
<evidence type="ECO:0000312" key="9">
    <source>
        <dbReference type="RGD" id="1590039"/>
    </source>
</evidence>
<organism evidence="8">
    <name type="scientific">Rattus norvegicus</name>
    <name type="common">Rat</name>
    <dbReference type="NCBI Taxonomy" id="10116"/>
    <lineage>
        <taxon>Eukaryota</taxon>
        <taxon>Metazoa</taxon>
        <taxon>Chordata</taxon>
        <taxon>Craniata</taxon>
        <taxon>Vertebrata</taxon>
        <taxon>Euteleostomi</taxon>
        <taxon>Mammalia</taxon>
        <taxon>Eutheria</taxon>
        <taxon>Euarchontoglires</taxon>
        <taxon>Glires</taxon>
        <taxon>Rodentia</taxon>
        <taxon>Myomorpha</taxon>
        <taxon>Muroidea</taxon>
        <taxon>Muridae</taxon>
        <taxon>Murinae</taxon>
        <taxon>Rattus</taxon>
    </lineage>
</organism>
<feature type="chain" id="PRO_0000455683" description="Patched domain-containing protein 3">
    <location>
        <begin position="1"/>
        <end position="905"/>
    </location>
</feature>
<feature type="transmembrane region" description="Helical" evidence="3">
    <location>
        <begin position="94"/>
        <end position="114"/>
    </location>
</feature>
<feature type="transmembrane region" description="Helical" evidence="3">
    <location>
        <begin position="337"/>
        <end position="357"/>
    </location>
</feature>
<feature type="transmembrane region" description="Helical" evidence="3">
    <location>
        <begin position="369"/>
        <end position="389"/>
    </location>
</feature>
<feature type="transmembrane region" description="Helical" evidence="3">
    <location>
        <begin position="391"/>
        <end position="411"/>
    </location>
</feature>
<feature type="transmembrane region" description="Helical" evidence="3">
    <location>
        <begin position="441"/>
        <end position="461"/>
    </location>
</feature>
<feature type="transmembrane region" description="Helical" evidence="3">
    <location>
        <begin position="475"/>
        <end position="495"/>
    </location>
</feature>
<feature type="transmembrane region" description="Helical" evidence="3">
    <location>
        <begin position="558"/>
        <end position="578"/>
    </location>
</feature>
<feature type="transmembrane region" description="Helical" evidence="3">
    <location>
        <begin position="759"/>
        <end position="779"/>
    </location>
</feature>
<feature type="transmembrane region" description="Helical" evidence="3">
    <location>
        <begin position="781"/>
        <end position="801"/>
    </location>
</feature>
<feature type="transmembrane region" description="Helical" evidence="3">
    <location>
        <begin position="813"/>
        <end position="833"/>
    </location>
</feature>
<feature type="transmembrane region" description="Helical" evidence="3">
    <location>
        <begin position="849"/>
        <end position="869"/>
    </location>
</feature>
<feature type="transmembrane region" description="Helical" evidence="3">
    <location>
        <begin position="882"/>
        <end position="902"/>
    </location>
</feature>
<feature type="domain" description="SSD" evidence="4">
    <location>
        <begin position="338"/>
        <end position="495"/>
    </location>
</feature>
<feature type="region of interest" description="Disordered" evidence="5">
    <location>
        <begin position="1"/>
        <end position="67"/>
    </location>
</feature>
<feature type="glycosylation site" description="N-linked (GlcNAc...) asparagine" evidence="3">
    <location>
        <position position="146"/>
    </location>
</feature>
<feature type="glycosylation site" description="N-linked (GlcNAc...) asparagine" evidence="3">
    <location>
        <position position="199"/>
    </location>
</feature>
<feature type="glycosylation site" description="N-linked (GlcNAc...) asparagine" evidence="3">
    <location>
        <position position="229"/>
    </location>
</feature>
<feature type="glycosylation site" description="N-linked (GlcNAc...) asparagine" evidence="3">
    <location>
        <position position="233"/>
    </location>
</feature>
<feature type="glycosylation site" description="N-linked (GlcNAc...) asparagine" evidence="3">
    <location>
        <position position="647"/>
    </location>
</feature>
<feature type="glycosylation site" description="N-linked (GlcNAc...) asparagine" evidence="3">
    <location>
        <position position="661"/>
    </location>
</feature>
<feature type="glycosylation site" description="N-linked (GlcNAc...) asparagine" evidence="3">
    <location>
        <position position="692"/>
    </location>
</feature>
<gene>
    <name evidence="9" type="primary">Ptchd3</name>
</gene>
<proteinExistence type="evidence at protein level"/>
<keyword id="KW-1003">Cell membrane</keyword>
<keyword id="KW-0966">Cell projection</keyword>
<keyword id="KW-0969">Cilium</keyword>
<keyword id="KW-0256">Endoplasmic reticulum</keyword>
<keyword id="KW-0282">Flagellum</keyword>
<keyword id="KW-0325">Glycoprotein</keyword>
<keyword id="KW-0472">Membrane</keyword>
<keyword id="KW-1185">Reference proteome</keyword>
<keyword id="KW-0812">Transmembrane</keyword>
<keyword id="KW-1133">Transmembrane helix</keyword>
<protein>
    <recommendedName>
        <fullName evidence="9">Patched domain-containing protein 3</fullName>
    </recommendedName>
</protein>
<name>PTHD3_RAT</name>
<comment type="function">
    <text evidence="1">May play a role in sperm development or sperm function. However, does not appear to have an essential role in spermatogenesis or male fertility.</text>
</comment>
<comment type="subcellular location">
    <subcellularLocation>
        <location evidence="6">Cell projection</location>
        <location evidence="6">Cilium</location>
        <location evidence="6">Flagellum membrane</location>
        <topology evidence="3">Multi-pass membrane protein</topology>
    </subcellularLocation>
    <subcellularLocation>
        <location evidence="2">Endoplasmic reticulum membrane</location>
        <topology evidence="3">Multi-pass membrane protein</topology>
    </subcellularLocation>
    <text evidence="6">Localizes to the midpiece of the sperm tail.</text>
</comment>
<comment type="tissue specificity">
    <text evidence="6">Expressed in germ cells of the testis (at protein level).</text>
</comment>
<comment type="similarity">
    <text evidence="7">Belongs to the patched family.</text>
</comment>
<accession>M0R3Q7</accession>